<protein>
    <recommendedName>
        <fullName evidence="1">S-adenosylmethionine synthase</fullName>
        <shortName evidence="1">AdoMet synthase</shortName>
        <ecNumber evidence="1">2.5.1.6</ecNumber>
    </recommendedName>
    <alternativeName>
        <fullName evidence="1">Methionine adenosyltransferase</fullName>
    </alternativeName>
</protein>
<accession>C3MYC2</accession>
<reference key="1">
    <citation type="journal article" date="2009" name="Proc. Natl. Acad. Sci. U.S.A.">
        <title>Biogeography of the Sulfolobus islandicus pan-genome.</title>
        <authorList>
            <person name="Reno M.L."/>
            <person name="Held N.L."/>
            <person name="Fields C.J."/>
            <person name="Burke P.V."/>
            <person name="Whitaker R.J."/>
        </authorList>
    </citation>
    <scope>NUCLEOTIDE SEQUENCE [LARGE SCALE GENOMIC DNA]</scope>
    <source>
        <strain>M.14.25 / Kamchatka #1</strain>
    </source>
</reference>
<keyword id="KW-0067">ATP-binding</keyword>
<keyword id="KW-0460">Magnesium</keyword>
<keyword id="KW-0547">Nucleotide-binding</keyword>
<keyword id="KW-0554">One-carbon metabolism</keyword>
<keyword id="KW-0808">Transferase</keyword>
<name>METK_SACI4</name>
<dbReference type="EC" id="2.5.1.6" evidence="1"/>
<dbReference type="EMBL" id="CP001400">
    <property type="protein sequence ID" value="ACP38679.1"/>
    <property type="molecule type" value="Genomic_DNA"/>
</dbReference>
<dbReference type="RefSeq" id="WP_012711906.1">
    <property type="nucleotide sequence ID" value="NC_012588.1"/>
</dbReference>
<dbReference type="SMR" id="C3MYC2"/>
<dbReference type="KEGG" id="sia:M1425_1935"/>
<dbReference type="HOGENOM" id="CLU_057642_0_0_2"/>
<dbReference type="UniPathway" id="UPA00315">
    <property type="reaction ID" value="UER00080"/>
</dbReference>
<dbReference type="Proteomes" id="UP000001350">
    <property type="component" value="Chromosome"/>
</dbReference>
<dbReference type="GO" id="GO:0005524">
    <property type="term" value="F:ATP binding"/>
    <property type="evidence" value="ECO:0007669"/>
    <property type="project" value="UniProtKB-UniRule"/>
</dbReference>
<dbReference type="GO" id="GO:0000287">
    <property type="term" value="F:magnesium ion binding"/>
    <property type="evidence" value="ECO:0007669"/>
    <property type="project" value="UniProtKB-UniRule"/>
</dbReference>
<dbReference type="GO" id="GO:0004478">
    <property type="term" value="F:methionine adenosyltransferase activity"/>
    <property type="evidence" value="ECO:0007669"/>
    <property type="project" value="UniProtKB-UniRule"/>
</dbReference>
<dbReference type="GO" id="GO:0006730">
    <property type="term" value="P:one-carbon metabolic process"/>
    <property type="evidence" value="ECO:0007669"/>
    <property type="project" value="UniProtKB-KW"/>
</dbReference>
<dbReference type="GO" id="GO:0006556">
    <property type="term" value="P:S-adenosylmethionine biosynthetic process"/>
    <property type="evidence" value="ECO:0007669"/>
    <property type="project" value="UniProtKB-UniRule"/>
</dbReference>
<dbReference type="Gene3D" id="3.30.300.10">
    <property type="match status" value="1"/>
</dbReference>
<dbReference type="Gene3D" id="3.30.300.280">
    <property type="entry name" value="S-adenosylmethionine synthetase, C-terminal domain"/>
    <property type="match status" value="2"/>
</dbReference>
<dbReference type="HAMAP" id="MF_00136">
    <property type="entry name" value="S_AdoMet_synth2"/>
    <property type="match status" value="1"/>
</dbReference>
<dbReference type="InterPro" id="IPR027790">
    <property type="entry name" value="AdoMet_synthase_2_family"/>
</dbReference>
<dbReference type="InterPro" id="IPR042544">
    <property type="entry name" value="AdoMet_synthase_3"/>
</dbReference>
<dbReference type="InterPro" id="IPR002795">
    <property type="entry name" value="S-AdoMet_synthetase_arc"/>
</dbReference>
<dbReference type="NCBIfam" id="NF003365">
    <property type="entry name" value="PRK04439.1-4"/>
    <property type="match status" value="1"/>
</dbReference>
<dbReference type="NCBIfam" id="NF003366">
    <property type="entry name" value="PRK04439.1-5"/>
    <property type="match status" value="1"/>
</dbReference>
<dbReference type="PANTHER" id="PTHR36697">
    <property type="entry name" value="S-ADENOSYLMETHIONINE SYNTHASE"/>
    <property type="match status" value="1"/>
</dbReference>
<dbReference type="PANTHER" id="PTHR36697:SF1">
    <property type="entry name" value="S-ADENOSYLMETHIONINE SYNTHASE"/>
    <property type="match status" value="1"/>
</dbReference>
<dbReference type="Pfam" id="PF01941">
    <property type="entry name" value="AdoMet_Synthase"/>
    <property type="match status" value="1"/>
</dbReference>
<comment type="function">
    <text evidence="1">Catalyzes the formation of S-adenosylmethionine from methionine and ATP.</text>
</comment>
<comment type="catalytic activity">
    <reaction evidence="1">
        <text>L-methionine + ATP + H2O = S-adenosyl-L-methionine + phosphate + diphosphate</text>
        <dbReference type="Rhea" id="RHEA:21080"/>
        <dbReference type="ChEBI" id="CHEBI:15377"/>
        <dbReference type="ChEBI" id="CHEBI:30616"/>
        <dbReference type="ChEBI" id="CHEBI:33019"/>
        <dbReference type="ChEBI" id="CHEBI:43474"/>
        <dbReference type="ChEBI" id="CHEBI:57844"/>
        <dbReference type="ChEBI" id="CHEBI:59789"/>
        <dbReference type="EC" id="2.5.1.6"/>
    </reaction>
</comment>
<comment type="cofactor">
    <cofactor evidence="1">
        <name>Mg(2+)</name>
        <dbReference type="ChEBI" id="CHEBI:18420"/>
    </cofactor>
</comment>
<comment type="pathway">
    <text evidence="1">Amino-acid biosynthesis; S-adenosyl-L-methionine biosynthesis; S-adenosyl-L-methionine from L-methionine: step 1/1.</text>
</comment>
<comment type="similarity">
    <text evidence="1">Belongs to the AdoMet synthase 2 family.</text>
</comment>
<proteinExistence type="inferred from homology"/>
<gene>
    <name evidence="1" type="primary">mat</name>
    <name type="ordered locus">M1425_1935</name>
</gene>
<evidence type="ECO:0000255" key="1">
    <source>
        <dbReference type="HAMAP-Rule" id="MF_00136"/>
    </source>
</evidence>
<organism>
    <name type="scientific">Saccharolobus islandicus (strain M.14.25 / Kamchatka #1)</name>
    <name type="common">Sulfolobus islandicus</name>
    <dbReference type="NCBI Taxonomy" id="427317"/>
    <lineage>
        <taxon>Archaea</taxon>
        <taxon>Thermoproteota</taxon>
        <taxon>Thermoprotei</taxon>
        <taxon>Sulfolobales</taxon>
        <taxon>Sulfolobaceae</taxon>
        <taxon>Saccharolobus</taxon>
    </lineage>
</organism>
<sequence>MRNINVQLNPLSDIEKLQVELVERKGLGHPDYIADAVAEEASRKLSLYYLKKYGVILHHNLDKTLVVGGQATPRFKGGDVIQPIYIVVAGRATTEVKTESGIEQIPVGTIIIESVKEWIRNNFRYLDAEKHLIVDYKIGKGSTDLVGIFEAGKRVPLSNDTSFGVGFAPFTKLEKLVYETERHLNSKQFKAKLPEVGEDIKVMGLRRGNEVDLTIAMATISELIEDVNHYINVKEQAKNEILDLASKIAPDYDVRIYVNTGDKIDKNILYLTVTGTSAEHGDDGMTGRGNRGVGLITPMRPMSLEATAGKNPVNHVGKLYNVLANLIANKIAQEVKDVKFSQVQVLGQIGRPIDDPLIANVDVITYDGKLNDETKNEISGIVDEMLSSFNKLTELILEGKATLF</sequence>
<feature type="chain" id="PRO_1000203217" description="S-adenosylmethionine synthase">
    <location>
        <begin position="1"/>
        <end position="404"/>
    </location>
</feature>
<feature type="binding site" evidence="1">
    <location>
        <begin position="139"/>
        <end position="144"/>
    </location>
    <ligand>
        <name>ATP</name>
        <dbReference type="ChEBI" id="CHEBI:30616"/>
    </ligand>
</feature>